<proteinExistence type="inferred from homology"/>
<sequence length="128" mass="14763">MIVKSLEDIQGTEDHQKGETWESRRFVLNKDNVGFSLNDTIIKAGTESYFWYKNHIEAVYCIEGEGEVEKKDTGEVWQLKPGTMYLLNDNDKHYLRAKTQMRMVCVFNPALVGTETHDEDGVYPLLAE</sequence>
<comment type="function">
    <text evidence="1">Catalyzes the circularization of gamma-N-acetyl-alpha,gamma-diaminobutyric acid (ADABA) to ectoine (1,4,5,6-tetrahydro-2-methyl-4-pyrimidine carboxylic acid), which is an excellent osmoprotectant.</text>
</comment>
<comment type="catalytic activity">
    <reaction evidence="1">
        <text>(2S)-4-acetamido-2-aminobutanoate = L-ectoine + H2O</text>
        <dbReference type="Rhea" id="RHEA:17281"/>
        <dbReference type="ChEBI" id="CHEBI:15377"/>
        <dbReference type="ChEBI" id="CHEBI:58515"/>
        <dbReference type="ChEBI" id="CHEBI:58929"/>
        <dbReference type="EC" id="4.2.1.108"/>
    </reaction>
</comment>
<comment type="pathway">
    <text evidence="1">Amine and polyamine biosynthesis; ectoine biosynthesis; L-ectoine from L-aspartate 4-semialdehyde: step 3/3.</text>
</comment>
<comment type="similarity">
    <text evidence="1">Belongs to the ectoine synthase family.</text>
</comment>
<evidence type="ECO:0000255" key="1">
    <source>
        <dbReference type="HAMAP-Rule" id="MF_01255"/>
    </source>
</evidence>
<accession>Q8ESU7</accession>
<reference key="1">
    <citation type="journal article" date="2002" name="Nucleic Acids Res.">
        <title>Genome sequence of Oceanobacillus iheyensis isolated from the Iheya Ridge and its unexpected adaptive capabilities to extreme environments.</title>
        <authorList>
            <person name="Takami H."/>
            <person name="Takaki Y."/>
            <person name="Uchiyama I."/>
        </authorList>
    </citation>
    <scope>NUCLEOTIDE SEQUENCE [LARGE SCALE GENOMIC DNA]</scope>
    <source>
        <strain>DSM 14371 / CIP 107618 / JCM 11309 / KCTC 3954 / HTE831</strain>
    </source>
</reference>
<dbReference type="EC" id="4.2.1.108" evidence="1"/>
<dbReference type="EMBL" id="BA000028">
    <property type="protein sequence ID" value="BAC12475.1"/>
    <property type="molecule type" value="Genomic_DNA"/>
</dbReference>
<dbReference type="RefSeq" id="WP_011064922.1">
    <property type="nucleotide sequence ID" value="NC_004193.1"/>
</dbReference>
<dbReference type="SMR" id="Q8ESU7"/>
<dbReference type="STRING" id="221109.gene:10732723"/>
<dbReference type="KEGG" id="oih:OB0519"/>
<dbReference type="eggNOG" id="COG1917">
    <property type="taxonomic scope" value="Bacteria"/>
</dbReference>
<dbReference type="HOGENOM" id="CLU_154525_0_0_9"/>
<dbReference type="OrthoDB" id="4406415at2"/>
<dbReference type="PhylomeDB" id="Q8ESU7"/>
<dbReference type="UniPathway" id="UPA00067">
    <property type="reaction ID" value="UER00123"/>
</dbReference>
<dbReference type="Proteomes" id="UP000000822">
    <property type="component" value="Chromosome"/>
</dbReference>
<dbReference type="GO" id="GO:0033990">
    <property type="term" value="F:ectoine synthase activity"/>
    <property type="evidence" value="ECO:0007669"/>
    <property type="project" value="UniProtKB-EC"/>
</dbReference>
<dbReference type="GO" id="GO:0019491">
    <property type="term" value="P:ectoine biosynthetic process"/>
    <property type="evidence" value="ECO:0007669"/>
    <property type="project" value="UniProtKB-UniRule"/>
</dbReference>
<dbReference type="CDD" id="cd06978">
    <property type="entry name" value="cupin_EctC"/>
    <property type="match status" value="1"/>
</dbReference>
<dbReference type="Gene3D" id="2.60.120.10">
    <property type="entry name" value="Jelly Rolls"/>
    <property type="match status" value="1"/>
</dbReference>
<dbReference type="HAMAP" id="MF_01255">
    <property type="entry name" value="Ectoine_synth"/>
    <property type="match status" value="1"/>
</dbReference>
<dbReference type="InterPro" id="IPR010462">
    <property type="entry name" value="Ectoine_synth"/>
</dbReference>
<dbReference type="InterPro" id="IPR014710">
    <property type="entry name" value="RmlC-like_jellyroll"/>
</dbReference>
<dbReference type="InterPro" id="IPR011051">
    <property type="entry name" value="RmlC_Cupin_sf"/>
</dbReference>
<dbReference type="NCBIfam" id="NF009806">
    <property type="entry name" value="PRK13290.1"/>
    <property type="match status" value="1"/>
</dbReference>
<dbReference type="PANTHER" id="PTHR39289">
    <property type="match status" value="1"/>
</dbReference>
<dbReference type="PANTHER" id="PTHR39289:SF1">
    <property type="entry name" value="L-ECTOINE SYNTHASE"/>
    <property type="match status" value="1"/>
</dbReference>
<dbReference type="Pfam" id="PF06339">
    <property type="entry name" value="Ectoine_synth"/>
    <property type="match status" value="1"/>
</dbReference>
<dbReference type="SUPFAM" id="SSF51182">
    <property type="entry name" value="RmlC-like cupins"/>
    <property type="match status" value="1"/>
</dbReference>
<keyword id="KW-0456">Lyase</keyword>
<keyword id="KW-1185">Reference proteome</keyword>
<organism>
    <name type="scientific">Oceanobacillus iheyensis (strain DSM 14371 / CIP 107618 / JCM 11309 / KCTC 3954 / HTE831)</name>
    <dbReference type="NCBI Taxonomy" id="221109"/>
    <lineage>
        <taxon>Bacteria</taxon>
        <taxon>Bacillati</taxon>
        <taxon>Bacillota</taxon>
        <taxon>Bacilli</taxon>
        <taxon>Bacillales</taxon>
        <taxon>Bacillaceae</taxon>
        <taxon>Oceanobacillus</taxon>
    </lineage>
</organism>
<feature type="chain" id="PRO_0000220155" description="L-ectoine synthase">
    <location>
        <begin position="1"/>
        <end position="128"/>
    </location>
</feature>
<name>ECTC_OCEIH</name>
<gene>
    <name evidence="1" type="primary">ectC</name>
    <name type="ordered locus">OB0519</name>
</gene>
<protein>
    <recommendedName>
        <fullName evidence="1">L-ectoine synthase</fullName>
        <ecNumber evidence="1">4.2.1.108</ecNumber>
    </recommendedName>
    <alternativeName>
        <fullName evidence="1">N-acetyldiaminobutyrate dehydratase</fullName>
    </alternativeName>
</protein>